<proteinExistence type="inferred from homology"/>
<keyword id="KW-0066">ATP synthesis</keyword>
<keyword id="KW-0997">Cell inner membrane</keyword>
<keyword id="KW-1003">Cell membrane</keyword>
<keyword id="KW-0138">CF(0)</keyword>
<keyword id="KW-0375">Hydrogen ion transport</keyword>
<keyword id="KW-0406">Ion transport</keyword>
<keyword id="KW-0472">Membrane</keyword>
<keyword id="KW-0812">Transmembrane</keyword>
<keyword id="KW-1133">Transmembrane helix</keyword>
<keyword id="KW-0813">Transport</keyword>
<accession>B4SYD7</accession>
<feature type="chain" id="PRO_0000362439" description="ATP synthase subunit a">
    <location>
        <begin position="1"/>
        <end position="271"/>
    </location>
</feature>
<feature type="transmembrane region" description="Helical" evidence="1">
    <location>
        <begin position="38"/>
        <end position="58"/>
    </location>
</feature>
<feature type="transmembrane region" description="Helical" evidence="1">
    <location>
        <begin position="100"/>
        <end position="120"/>
    </location>
</feature>
<feature type="transmembrane region" description="Helical" evidence="1">
    <location>
        <begin position="146"/>
        <end position="166"/>
    </location>
</feature>
<feature type="transmembrane region" description="Helical" evidence="1">
    <location>
        <begin position="220"/>
        <end position="240"/>
    </location>
</feature>
<feature type="transmembrane region" description="Helical" evidence="1">
    <location>
        <begin position="242"/>
        <end position="262"/>
    </location>
</feature>
<gene>
    <name evidence="1" type="primary">atpB</name>
    <name type="ordered locus">SNSL254_A4152</name>
</gene>
<protein>
    <recommendedName>
        <fullName evidence="1">ATP synthase subunit a</fullName>
    </recommendedName>
    <alternativeName>
        <fullName evidence="1">ATP synthase F0 sector subunit a</fullName>
    </alternativeName>
    <alternativeName>
        <fullName evidence="1">F-ATPase subunit 6</fullName>
    </alternativeName>
</protein>
<evidence type="ECO:0000255" key="1">
    <source>
        <dbReference type="HAMAP-Rule" id="MF_01393"/>
    </source>
</evidence>
<organism>
    <name type="scientific">Salmonella newport (strain SL254)</name>
    <dbReference type="NCBI Taxonomy" id="423368"/>
    <lineage>
        <taxon>Bacteria</taxon>
        <taxon>Pseudomonadati</taxon>
        <taxon>Pseudomonadota</taxon>
        <taxon>Gammaproteobacteria</taxon>
        <taxon>Enterobacterales</taxon>
        <taxon>Enterobacteriaceae</taxon>
        <taxon>Salmonella</taxon>
    </lineage>
</organism>
<name>ATP6_SALNS</name>
<sequence>MASENMTPQEYIGHHLNNLQLDLRTFSLVDPQNPPATFWTLNIDSMFFSVVLGLLFLVMFRSVAKKATSGVPGKFQTAIELIVGFVHGSVKDMYHGKSKLIAPLALTIFVWVFLMNLMDLLPIDLLPYIAEHWLGLPATRVVPSADVNITLSMALGVFILILFYSIKMKGIGGFAKELTLQPFNHWAFIPVNLILEGVSLLSKPVSLGLRLFGNMYAGELIFILIAGLLPWWSQWILNVPWAIFHILIITLQAFIFMVLTIVYLSMASEEH</sequence>
<dbReference type="EMBL" id="CP001113">
    <property type="protein sequence ID" value="ACF62512.1"/>
    <property type="molecule type" value="Genomic_DNA"/>
</dbReference>
<dbReference type="RefSeq" id="WP_000135632.1">
    <property type="nucleotide sequence ID" value="NZ_CCMR01000001.1"/>
</dbReference>
<dbReference type="SMR" id="B4SYD7"/>
<dbReference type="KEGG" id="see:SNSL254_A4152"/>
<dbReference type="HOGENOM" id="CLU_041018_1_0_6"/>
<dbReference type="Proteomes" id="UP000008824">
    <property type="component" value="Chromosome"/>
</dbReference>
<dbReference type="GO" id="GO:0005886">
    <property type="term" value="C:plasma membrane"/>
    <property type="evidence" value="ECO:0007669"/>
    <property type="project" value="UniProtKB-SubCell"/>
</dbReference>
<dbReference type="GO" id="GO:0045259">
    <property type="term" value="C:proton-transporting ATP synthase complex"/>
    <property type="evidence" value="ECO:0007669"/>
    <property type="project" value="UniProtKB-KW"/>
</dbReference>
<dbReference type="GO" id="GO:0046933">
    <property type="term" value="F:proton-transporting ATP synthase activity, rotational mechanism"/>
    <property type="evidence" value="ECO:0007669"/>
    <property type="project" value="UniProtKB-UniRule"/>
</dbReference>
<dbReference type="GO" id="GO:0042777">
    <property type="term" value="P:proton motive force-driven plasma membrane ATP synthesis"/>
    <property type="evidence" value="ECO:0007669"/>
    <property type="project" value="TreeGrafter"/>
</dbReference>
<dbReference type="CDD" id="cd00310">
    <property type="entry name" value="ATP-synt_Fo_a_6"/>
    <property type="match status" value="1"/>
</dbReference>
<dbReference type="FunFam" id="1.20.120.220:FF:000002">
    <property type="entry name" value="ATP synthase subunit a"/>
    <property type="match status" value="1"/>
</dbReference>
<dbReference type="Gene3D" id="1.20.120.220">
    <property type="entry name" value="ATP synthase, F0 complex, subunit A"/>
    <property type="match status" value="1"/>
</dbReference>
<dbReference type="HAMAP" id="MF_01393">
    <property type="entry name" value="ATP_synth_a_bact"/>
    <property type="match status" value="1"/>
</dbReference>
<dbReference type="InterPro" id="IPR045082">
    <property type="entry name" value="ATP_syn_F0_a_bact/chloroplast"/>
</dbReference>
<dbReference type="InterPro" id="IPR000568">
    <property type="entry name" value="ATP_synth_F0_asu"/>
</dbReference>
<dbReference type="InterPro" id="IPR023011">
    <property type="entry name" value="ATP_synth_F0_asu_AS"/>
</dbReference>
<dbReference type="InterPro" id="IPR035908">
    <property type="entry name" value="F0_ATP_A_sf"/>
</dbReference>
<dbReference type="NCBIfam" id="TIGR01131">
    <property type="entry name" value="ATP_synt_6_or_A"/>
    <property type="match status" value="1"/>
</dbReference>
<dbReference type="NCBIfam" id="NF004477">
    <property type="entry name" value="PRK05815.1-1"/>
    <property type="match status" value="1"/>
</dbReference>
<dbReference type="PANTHER" id="PTHR42823">
    <property type="entry name" value="ATP SYNTHASE SUBUNIT A, CHLOROPLASTIC"/>
    <property type="match status" value="1"/>
</dbReference>
<dbReference type="PANTHER" id="PTHR42823:SF3">
    <property type="entry name" value="ATP SYNTHASE SUBUNIT A, CHLOROPLASTIC"/>
    <property type="match status" value="1"/>
</dbReference>
<dbReference type="Pfam" id="PF00119">
    <property type="entry name" value="ATP-synt_A"/>
    <property type="match status" value="1"/>
</dbReference>
<dbReference type="PRINTS" id="PR00123">
    <property type="entry name" value="ATPASEA"/>
</dbReference>
<dbReference type="SUPFAM" id="SSF81336">
    <property type="entry name" value="F1F0 ATP synthase subunit A"/>
    <property type="match status" value="1"/>
</dbReference>
<dbReference type="PROSITE" id="PS00449">
    <property type="entry name" value="ATPASE_A"/>
    <property type="match status" value="1"/>
</dbReference>
<comment type="function">
    <text evidence="1">Key component of the proton channel; it plays a direct role in the translocation of protons across the membrane.</text>
</comment>
<comment type="subunit">
    <text evidence="1">F-type ATPases have 2 components, CF(1) - the catalytic core - and CF(0) - the membrane proton channel. CF(1) has five subunits: alpha(3), beta(3), gamma(1), delta(1), epsilon(1). CF(0) has three main subunits: a(1), b(2) and c(9-12). The alpha and beta chains form an alternating ring which encloses part of the gamma chain. CF(1) is attached to CF(0) by a central stalk formed by the gamma and epsilon chains, while a peripheral stalk is formed by the delta and b chains.</text>
</comment>
<comment type="subcellular location">
    <subcellularLocation>
        <location evidence="1">Cell inner membrane</location>
        <topology evidence="1">Multi-pass membrane protein</topology>
    </subcellularLocation>
</comment>
<comment type="similarity">
    <text evidence="1">Belongs to the ATPase A chain family.</text>
</comment>
<reference key="1">
    <citation type="journal article" date="2011" name="J. Bacteriol.">
        <title>Comparative genomics of 28 Salmonella enterica isolates: evidence for CRISPR-mediated adaptive sublineage evolution.</title>
        <authorList>
            <person name="Fricke W.F."/>
            <person name="Mammel M.K."/>
            <person name="McDermott P.F."/>
            <person name="Tartera C."/>
            <person name="White D.G."/>
            <person name="Leclerc J.E."/>
            <person name="Ravel J."/>
            <person name="Cebula T.A."/>
        </authorList>
    </citation>
    <scope>NUCLEOTIDE SEQUENCE [LARGE SCALE GENOMIC DNA]</scope>
    <source>
        <strain>SL254</strain>
    </source>
</reference>